<keyword id="KW-0067">ATP-binding</keyword>
<keyword id="KW-0235">DNA replication</keyword>
<keyword id="KW-0238">DNA-binding</keyword>
<keyword id="KW-1048">Host nucleus</keyword>
<keyword id="KW-0547">Nucleotide-binding</keyword>
<sequence>MTATPGAAADAVRVEGAGACSDGGEEARYASSASLARMLYGADLSERVRRRHPAVCVEHQSGRPVALPSPLAADARRVTVVRAPMGSGKTTALLRWLGEALGATDASVLVVSCRRSFTRTLHERLRDAALPAFATYFDARSYVMTGAAYRRLLVQVESLHRVDEELLGDYDILVLDEVMSTLAQLYSPTMGRLHRVDALLHRLLRRCPRIVAMDATVNAQLVDLLAALRGAGSVHVVICDYASAGFLQRRCTVARRLGARVLAARLKGDAEDGAEDGGASFFTRLRARLEAGHNVCVFSSTVLFSELAARFCLTFTPSVLVLNSTRPAEGDVSRWRDVRVLIYTTVITVGLSFDHSYFHAMFAYVKPMSHGPDMVSVYQSLGRIRSLVDNELCVYFDSSAARPEPVFTPMLLNHVVAEDGGWPATFSEVTNLLCCSFRAACAPAFRGARGLALFPRFKYKHLFERCTLASASDSLNILHALLENNRVGFQLEALRSAHRRGILPLSRGRARRRPAAAADLRALAAGIPSPVSAEGLAEHPAVAAFADKYLRAGGAPPAALEELLRALNGPAARARFVNLAVLGGCLHVPAAAESLEVFAGIYRHYASGEVPVLTEAGAVETAALAPGLRWKPTALFGLRRMARALGLLRRRGGGEADDVADAAHGLTEPAIVELVGPPGGHDYAQCLLEIARCNITPAGVMARGPVVAVAARLSGRGFAQGRGVGLGAAAHAVSVFKVIWEEVFGARLQKSTQTFPGHARVKNLRKHEIVALLDLAGIDRAGRDTHRELYRLLMSHKARFASPKYSLRLPKWGRLLGFAARGPEPGPDAPPEASLEAALARVPALHWPCAAGAVDFCAL</sequence>
<dbReference type="EMBL" id="Z48053">
    <property type="protein sequence ID" value="CAA88124.1"/>
    <property type="molecule type" value="Genomic_DNA"/>
</dbReference>
<dbReference type="EMBL" id="AJ004801">
    <property type="protein sequence ID" value="CAA06125.1"/>
    <property type="molecule type" value="Genomic_DNA"/>
</dbReference>
<dbReference type="PIR" id="S61246">
    <property type="entry name" value="S61246"/>
</dbReference>
<dbReference type="RefSeq" id="NP_045350.1">
    <property type="nucleotide sequence ID" value="NC_001847.1"/>
</dbReference>
<dbReference type="Proteomes" id="UP000202075">
    <property type="component" value="Segment"/>
</dbReference>
<dbReference type="GO" id="GO:0042025">
    <property type="term" value="C:host cell nucleus"/>
    <property type="evidence" value="ECO:0007669"/>
    <property type="project" value="UniProtKB-SubCell"/>
</dbReference>
<dbReference type="GO" id="GO:0005524">
    <property type="term" value="F:ATP binding"/>
    <property type="evidence" value="ECO:0007669"/>
    <property type="project" value="UniProtKB-KW"/>
</dbReference>
<dbReference type="GO" id="GO:0016887">
    <property type="term" value="F:ATP hydrolysis activity"/>
    <property type="evidence" value="ECO:0007669"/>
    <property type="project" value="InterPro"/>
</dbReference>
<dbReference type="GO" id="GO:0003688">
    <property type="term" value="F:DNA replication origin binding"/>
    <property type="evidence" value="ECO:0007669"/>
    <property type="project" value="InterPro"/>
</dbReference>
<dbReference type="GO" id="GO:0006260">
    <property type="term" value="P:DNA replication"/>
    <property type="evidence" value="ECO:0007669"/>
    <property type="project" value="UniProtKB-KW"/>
</dbReference>
<dbReference type="FunFam" id="3.40.50.300:FF:001772">
    <property type="entry name" value="DNA replication origin-binding helicase"/>
    <property type="match status" value="1"/>
</dbReference>
<dbReference type="Gene3D" id="3.40.50.300">
    <property type="entry name" value="P-loop containing nucleotide triphosphate hydrolases"/>
    <property type="match status" value="1"/>
</dbReference>
<dbReference type="InterPro" id="IPR003593">
    <property type="entry name" value="AAA+_ATPase"/>
</dbReference>
<dbReference type="InterPro" id="IPR014001">
    <property type="entry name" value="Helicase_ATP-bd"/>
</dbReference>
<dbReference type="InterPro" id="IPR027417">
    <property type="entry name" value="P-loop_NTPase"/>
</dbReference>
<dbReference type="InterPro" id="IPR003450">
    <property type="entry name" value="Replication_origin-bd"/>
</dbReference>
<dbReference type="Pfam" id="PF02399">
    <property type="entry name" value="Herpes_ori_bp"/>
    <property type="match status" value="1"/>
</dbReference>
<dbReference type="SMART" id="SM00382">
    <property type="entry name" value="AAA"/>
    <property type="match status" value="1"/>
</dbReference>
<dbReference type="SMART" id="SM00487">
    <property type="entry name" value="DEXDc"/>
    <property type="match status" value="1"/>
</dbReference>
<dbReference type="SUPFAM" id="SSF52540">
    <property type="entry name" value="P-loop containing nucleoside triphosphate hydrolases"/>
    <property type="match status" value="1"/>
</dbReference>
<dbReference type="PROSITE" id="PS51192">
    <property type="entry name" value="HELICASE_ATP_BIND_1"/>
    <property type="match status" value="1"/>
</dbReference>
<proteinExistence type="inferred from homology"/>
<protein>
    <recommendedName>
        <fullName>Replication origin-binding protein</fullName>
    </recommendedName>
    <alternativeName>
        <fullName>OriBP</fullName>
        <shortName>OBP</shortName>
    </alternativeName>
</protein>
<gene>
    <name type="primary">UL9</name>
</gene>
<accession>P52377</accession>
<evidence type="ECO:0000250" key="1"/>
<evidence type="ECO:0000255" key="2">
    <source>
        <dbReference type="PROSITE-ProRule" id="PRU00541"/>
    </source>
</evidence>
<evidence type="ECO:0000305" key="3"/>
<name>OBP_BHV1C</name>
<feature type="chain" id="PRO_0000115867" description="Replication origin-binding protein">
    <location>
        <begin position="1"/>
        <end position="859"/>
    </location>
</feature>
<feature type="domain" description="Helicase ATP-binding" evidence="2">
    <location>
        <begin position="70"/>
        <end position="235"/>
    </location>
</feature>
<feature type="binding site" evidence="2">
    <location>
        <begin position="83"/>
        <end position="90"/>
    </location>
    <ligand>
        <name>ATP</name>
        <dbReference type="ChEBI" id="CHEBI:30616"/>
    </ligand>
</feature>
<reference key="1">
    <citation type="journal article" date="1995" name="Virology">
        <title>Nucleotide sequence analysis of a 30-kb region of the bovine herpesvirus 1 genome which exhibits a colinear gene arrangement with the UL21 to UL4 genes of herpes simplex virus.</title>
        <authorList>
            <person name="Vlcek C."/>
            <person name="Benes V."/>
            <person name="Lu Z."/>
            <person name="Kutish G.F."/>
            <person name="Paces V."/>
            <person name="Rock D."/>
            <person name="Letchworth G.J."/>
            <person name="Schwyzer M."/>
        </authorList>
    </citation>
    <scope>NUCLEOTIDE SEQUENCE [GENOMIC DNA]</scope>
</reference>
<organism>
    <name type="scientific">Bovine herpesvirus 1.1 (strain Cooper)</name>
    <name type="common">BoHV-1</name>
    <name type="synonym">Infectious bovine rhinotracheitis virus</name>
    <dbReference type="NCBI Taxonomy" id="10323"/>
    <lineage>
        <taxon>Viruses</taxon>
        <taxon>Duplodnaviria</taxon>
        <taxon>Heunggongvirae</taxon>
        <taxon>Peploviricota</taxon>
        <taxon>Herviviricetes</taxon>
        <taxon>Herpesvirales</taxon>
        <taxon>Orthoherpesviridae</taxon>
        <taxon>Alphaherpesvirinae</taxon>
        <taxon>Varicellovirus</taxon>
        <taxon>Varicellovirus bovinealpha1</taxon>
    </lineage>
</organism>
<organismHost>
    <name type="scientific">Bos taurus</name>
    <name type="common">Bovine</name>
    <dbReference type="NCBI Taxonomy" id="9913"/>
</organismHost>
<comment type="function">
    <text evidence="1">Functions as a docking protein to recruit essential components of the viral replication machinery to viral DNA origins. In the presence of the major DNA-binding protein, opens dsDNA leading to a conformational change in the origin that facilitates DNA unwinding and subsequent replication (By similarity).</text>
</comment>
<comment type="subunit">
    <text evidence="1">Homodimer. Interacts with the major DNA-binding protein. Interacts with the helicase/primase component UL8 and the polymerase accessory protein (By similarity).</text>
</comment>
<comment type="subcellular location">
    <subcellularLocation>
        <location evidence="3">Host nucleus</location>
    </subcellularLocation>
</comment>
<comment type="similarity">
    <text evidence="3">Belongs to the herpesviridae OriBP family.</text>
</comment>